<accession>B8FUJ1</accession>
<evidence type="ECO:0000255" key="1">
    <source>
        <dbReference type="HAMAP-Rule" id="MF_00254"/>
    </source>
</evidence>
<keyword id="KW-0030">Aminoacyl-tRNA synthetase</keyword>
<keyword id="KW-0067">ATP-binding</keyword>
<keyword id="KW-0963">Cytoplasm</keyword>
<keyword id="KW-0436">Ligase</keyword>
<keyword id="KW-0547">Nucleotide-binding</keyword>
<keyword id="KW-0648">Protein biosynthesis</keyword>
<gene>
    <name evidence="1" type="primary">glyQ</name>
    <name type="ordered locus">Dhaf_4255</name>
</gene>
<feature type="chain" id="PRO_1000125545" description="Glycine--tRNA ligase alpha subunit">
    <location>
        <begin position="1"/>
        <end position="296"/>
    </location>
</feature>
<proteinExistence type="inferred from homology"/>
<name>SYGA_DESHD</name>
<organism>
    <name type="scientific">Desulfitobacterium hafniense (strain DSM 10664 / DCB-2)</name>
    <dbReference type="NCBI Taxonomy" id="272564"/>
    <lineage>
        <taxon>Bacteria</taxon>
        <taxon>Bacillati</taxon>
        <taxon>Bacillota</taxon>
        <taxon>Clostridia</taxon>
        <taxon>Eubacteriales</taxon>
        <taxon>Desulfitobacteriaceae</taxon>
        <taxon>Desulfitobacterium</taxon>
    </lineage>
</organism>
<comment type="catalytic activity">
    <reaction evidence="1">
        <text>tRNA(Gly) + glycine + ATP = glycyl-tRNA(Gly) + AMP + diphosphate</text>
        <dbReference type="Rhea" id="RHEA:16013"/>
        <dbReference type="Rhea" id="RHEA-COMP:9664"/>
        <dbReference type="Rhea" id="RHEA-COMP:9683"/>
        <dbReference type="ChEBI" id="CHEBI:30616"/>
        <dbReference type="ChEBI" id="CHEBI:33019"/>
        <dbReference type="ChEBI" id="CHEBI:57305"/>
        <dbReference type="ChEBI" id="CHEBI:78442"/>
        <dbReference type="ChEBI" id="CHEBI:78522"/>
        <dbReference type="ChEBI" id="CHEBI:456215"/>
        <dbReference type="EC" id="6.1.1.14"/>
    </reaction>
</comment>
<comment type="subunit">
    <text evidence="1">Tetramer of two alpha and two beta subunits.</text>
</comment>
<comment type="subcellular location">
    <subcellularLocation>
        <location evidence="1">Cytoplasm</location>
    </subcellularLocation>
</comment>
<comment type="similarity">
    <text evidence="1">Belongs to the class-II aminoacyl-tRNA synthetase family.</text>
</comment>
<protein>
    <recommendedName>
        <fullName evidence="1">Glycine--tRNA ligase alpha subunit</fullName>
        <ecNumber evidence="1">6.1.1.14</ecNumber>
    </recommendedName>
    <alternativeName>
        <fullName evidence="1">Glycyl-tRNA synthetase alpha subunit</fullName>
        <shortName evidence="1">GlyRS</shortName>
    </alternativeName>
</protein>
<sequence length="296" mass="34347">MKFQDMILSLNQFWGEQGCIIAQPYDMEKGAGTFNPNTFLRALGPEPWKVAYIEPSRRPTDGRYGENPNRLQHYFQYQVIIKPSPDNIQELYLQSLERLGVNPKEHDIRFVEDNWESPTLGAWGLGWEVWLDGMEVTQFTYFQQCGGIDCKPVCAEITYGLERLAMYIQNKESVYDIEYVGDITYGDIYLQNEIDYSHYNFEAADVEALQTWFEMYEKEAIRIVEKGLVLPAYDYVLKCSHTFNLLDARGAISVTERTGYIARVRNLARLCAQAYVEQRERLGYPLLKEQSGKEAE</sequence>
<dbReference type="EC" id="6.1.1.14" evidence="1"/>
<dbReference type="EMBL" id="CP001336">
    <property type="protein sequence ID" value="ACL22261.1"/>
    <property type="molecule type" value="Genomic_DNA"/>
</dbReference>
<dbReference type="RefSeq" id="WP_005816395.1">
    <property type="nucleotide sequence ID" value="NC_011830.1"/>
</dbReference>
<dbReference type="SMR" id="B8FUJ1"/>
<dbReference type="KEGG" id="dhd:Dhaf_4255"/>
<dbReference type="HOGENOM" id="CLU_057066_1_0_9"/>
<dbReference type="Proteomes" id="UP000007726">
    <property type="component" value="Chromosome"/>
</dbReference>
<dbReference type="GO" id="GO:0005829">
    <property type="term" value="C:cytosol"/>
    <property type="evidence" value="ECO:0007669"/>
    <property type="project" value="TreeGrafter"/>
</dbReference>
<dbReference type="GO" id="GO:0005524">
    <property type="term" value="F:ATP binding"/>
    <property type="evidence" value="ECO:0007669"/>
    <property type="project" value="UniProtKB-UniRule"/>
</dbReference>
<dbReference type="GO" id="GO:0140096">
    <property type="term" value="F:catalytic activity, acting on a protein"/>
    <property type="evidence" value="ECO:0007669"/>
    <property type="project" value="UniProtKB-ARBA"/>
</dbReference>
<dbReference type="GO" id="GO:0004820">
    <property type="term" value="F:glycine-tRNA ligase activity"/>
    <property type="evidence" value="ECO:0007669"/>
    <property type="project" value="UniProtKB-UniRule"/>
</dbReference>
<dbReference type="GO" id="GO:0016740">
    <property type="term" value="F:transferase activity"/>
    <property type="evidence" value="ECO:0007669"/>
    <property type="project" value="UniProtKB-ARBA"/>
</dbReference>
<dbReference type="GO" id="GO:0006426">
    <property type="term" value="P:glycyl-tRNA aminoacylation"/>
    <property type="evidence" value="ECO:0007669"/>
    <property type="project" value="UniProtKB-UniRule"/>
</dbReference>
<dbReference type="CDD" id="cd00733">
    <property type="entry name" value="GlyRS_alpha_core"/>
    <property type="match status" value="1"/>
</dbReference>
<dbReference type="FunFam" id="3.30.930.10:FF:000006">
    <property type="entry name" value="Glycine--tRNA ligase alpha subunit"/>
    <property type="match status" value="1"/>
</dbReference>
<dbReference type="Gene3D" id="3.30.930.10">
    <property type="entry name" value="Bira Bifunctional Protein, Domain 2"/>
    <property type="match status" value="1"/>
</dbReference>
<dbReference type="Gene3D" id="1.20.58.180">
    <property type="entry name" value="Class II aaRS and biotin synthetases, domain 2"/>
    <property type="match status" value="1"/>
</dbReference>
<dbReference type="HAMAP" id="MF_00254">
    <property type="entry name" value="Gly_tRNA_synth_alpha"/>
    <property type="match status" value="1"/>
</dbReference>
<dbReference type="InterPro" id="IPR045864">
    <property type="entry name" value="aa-tRNA-synth_II/BPL/LPL"/>
</dbReference>
<dbReference type="InterPro" id="IPR006194">
    <property type="entry name" value="Gly-tRNA-synth_heterodimer"/>
</dbReference>
<dbReference type="InterPro" id="IPR002310">
    <property type="entry name" value="Gly-tRNA_ligase_asu"/>
</dbReference>
<dbReference type="NCBIfam" id="TIGR00388">
    <property type="entry name" value="glyQ"/>
    <property type="match status" value="1"/>
</dbReference>
<dbReference type="NCBIfam" id="NF006827">
    <property type="entry name" value="PRK09348.1"/>
    <property type="match status" value="1"/>
</dbReference>
<dbReference type="PANTHER" id="PTHR30075:SF2">
    <property type="entry name" value="GLYCINE--TRNA LIGASE, CHLOROPLASTIC_MITOCHONDRIAL 2"/>
    <property type="match status" value="1"/>
</dbReference>
<dbReference type="PANTHER" id="PTHR30075">
    <property type="entry name" value="GLYCYL-TRNA SYNTHETASE"/>
    <property type="match status" value="1"/>
</dbReference>
<dbReference type="Pfam" id="PF02091">
    <property type="entry name" value="tRNA-synt_2e"/>
    <property type="match status" value="1"/>
</dbReference>
<dbReference type="PRINTS" id="PR01044">
    <property type="entry name" value="TRNASYNTHGA"/>
</dbReference>
<dbReference type="SUPFAM" id="SSF55681">
    <property type="entry name" value="Class II aaRS and biotin synthetases"/>
    <property type="match status" value="1"/>
</dbReference>
<dbReference type="PROSITE" id="PS50861">
    <property type="entry name" value="AA_TRNA_LIGASE_II_GLYAB"/>
    <property type="match status" value="1"/>
</dbReference>
<reference key="1">
    <citation type="journal article" date="2012" name="BMC Microbiol.">
        <title>Genome sequence of Desulfitobacterium hafniense DCB-2, a Gram-positive anaerobe capable of dehalogenation and metal reduction.</title>
        <authorList>
            <person name="Kim S.H."/>
            <person name="Harzman C."/>
            <person name="Davis J.K."/>
            <person name="Hutcheson R."/>
            <person name="Broderick J.B."/>
            <person name="Marsh T.L."/>
            <person name="Tiedje J.M."/>
        </authorList>
    </citation>
    <scope>NUCLEOTIDE SEQUENCE [LARGE SCALE GENOMIC DNA]</scope>
    <source>
        <strain>DSM 10664 / DCB-2</strain>
    </source>
</reference>